<protein>
    <recommendedName>
        <fullName>Eukaryotic translation initiation factor 1A</fullName>
        <shortName>eIF-1A</shortName>
    </recommendedName>
    <alternativeName>
        <fullName>Eukaryotic translation initiation factor 4C</fullName>
        <shortName>eIF-4C</shortName>
    </alternativeName>
</protein>
<reference key="1">
    <citation type="journal article" date="1998" name="Nucleic Acids Res.">
        <title>Molecular cloning and expression of the mouse translation initiation factor eIF-1A.</title>
        <authorList>
            <person name="Davis W. Jr."/>
            <person name="Schultz R.M."/>
        </authorList>
    </citation>
    <scope>NUCLEOTIDE SEQUENCE [MRNA]</scope>
    <source>
        <strain>CF-1</strain>
    </source>
</reference>
<reference key="2">
    <citation type="journal article" date="2005" name="Science">
        <title>The transcriptional landscape of the mammalian genome.</title>
        <authorList>
            <person name="Carninci P."/>
            <person name="Kasukawa T."/>
            <person name="Katayama S."/>
            <person name="Gough J."/>
            <person name="Frith M.C."/>
            <person name="Maeda N."/>
            <person name="Oyama R."/>
            <person name="Ravasi T."/>
            <person name="Lenhard B."/>
            <person name="Wells C."/>
            <person name="Kodzius R."/>
            <person name="Shimokawa K."/>
            <person name="Bajic V.B."/>
            <person name="Brenner S.E."/>
            <person name="Batalov S."/>
            <person name="Forrest A.R."/>
            <person name="Zavolan M."/>
            <person name="Davis M.J."/>
            <person name="Wilming L.G."/>
            <person name="Aidinis V."/>
            <person name="Allen J.E."/>
            <person name="Ambesi-Impiombato A."/>
            <person name="Apweiler R."/>
            <person name="Aturaliya R.N."/>
            <person name="Bailey T.L."/>
            <person name="Bansal M."/>
            <person name="Baxter L."/>
            <person name="Beisel K.W."/>
            <person name="Bersano T."/>
            <person name="Bono H."/>
            <person name="Chalk A.M."/>
            <person name="Chiu K.P."/>
            <person name="Choudhary V."/>
            <person name="Christoffels A."/>
            <person name="Clutterbuck D.R."/>
            <person name="Crowe M.L."/>
            <person name="Dalla E."/>
            <person name="Dalrymple B.P."/>
            <person name="de Bono B."/>
            <person name="Della Gatta G."/>
            <person name="di Bernardo D."/>
            <person name="Down T."/>
            <person name="Engstrom P."/>
            <person name="Fagiolini M."/>
            <person name="Faulkner G."/>
            <person name="Fletcher C.F."/>
            <person name="Fukushima T."/>
            <person name="Furuno M."/>
            <person name="Futaki S."/>
            <person name="Gariboldi M."/>
            <person name="Georgii-Hemming P."/>
            <person name="Gingeras T.R."/>
            <person name="Gojobori T."/>
            <person name="Green R.E."/>
            <person name="Gustincich S."/>
            <person name="Harbers M."/>
            <person name="Hayashi Y."/>
            <person name="Hensch T.K."/>
            <person name="Hirokawa N."/>
            <person name="Hill D."/>
            <person name="Huminiecki L."/>
            <person name="Iacono M."/>
            <person name="Ikeo K."/>
            <person name="Iwama A."/>
            <person name="Ishikawa T."/>
            <person name="Jakt M."/>
            <person name="Kanapin A."/>
            <person name="Katoh M."/>
            <person name="Kawasawa Y."/>
            <person name="Kelso J."/>
            <person name="Kitamura H."/>
            <person name="Kitano H."/>
            <person name="Kollias G."/>
            <person name="Krishnan S.P."/>
            <person name="Kruger A."/>
            <person name="Kummerfeld S.K."/>
            <person name="Kurochkin I.V."/>
            <person name="Lareau L.F."/>
            <person name="Lazarevic D."/>
            <person name="Lipovich L."/>
            <person name="Liu J."/>
            <person name="Liuni S."/>
            <person name="McWilliam S."/>
            <person name="Madan Babu M."/>
            <person name="Madera M."/>
            <person name="Marchionni L."/>
            <person name="Matsuda H."/>
            <person name="Matsuzawa S."/>
            <person name="Miki H."/>
            <person name="Mignone F."/>
            <person name="Miyake S."/>
            <person name="Morris K."/>
            <person name="Mottagui-Tabar S."/>
            <person name="Mulder N."/>
            <person name="Nakano N."/>
            <person name="Nakauchi H."/>
            <person name="Ng P."/>
            <person name="Nilsson R."/>
            <person name="Nishiguchi S."/>
            <person name="Nishikawa S."/>
            <person name="Nori F."/>
            <person name="Ohara O."/>
            <person name="Okazaki Y."/>
            <person name="Orlando V."/>
            <person name="Pang K.C."/>
            <person name="Pavan W.J."/>
            <person name="Pavesi G."/>
            <person name="Pesole G."/>
            <person name="Petrovsky N."/>
            <person name="Piazza S."/>
            <person name="Reed J."/>
            <person name="Reid J.F."/>
            <person name="Ring B.Z."/>
            <person name="Ringwald M."/>
            <person name="Rost B."/>
            <person name="Ruan Y."/>
            <person name="Salzberg S.L."/>
            <person name="Sandelin A."/>
            <person name="Schneider C."/>
            <person name="Schoenbach C."/>
            <person name="Sekiguchi K."/>
            <person name="Semple C.A."/>
            <person name="Seno S."/>
            <person name="Sessa L."/>
            <person name="Sheng Y."/>
            <person name="Shibata Y."/>
            <person name="Shimada H."/>
            <person name="Shimada K."/>
            <person name="Silva D."/>
            <person name="Sinclair B."/>
            <person name="Sperling S."/>
            <person name="Stupka E."/>
            <person name="Sugiura K."/>
            <person name="Sultana R."/>
            <person name="Takenaka Y."/>
            <person name="Taki K."/>
            <person name="Tammoja K."/>
            <person name="Tan S.L."/>
            <person name="Tang S."/>
            <person name="Taylor M.S."/>
            <person name="Tegner J."/>
            <person name="Teichmann S.A."/>
            <person name="Ueda H.R."/>
            <person name="van Nimwegen E."/>
            <person name="Verardo R."/>
            <person name="Wei C.L."/>
            <person name="Yagi K."/>
            <person name="Yamanishi H."/>
            <person name="Zabarovsky E."/>
            <person name="Zhu S."/>
            <person name="Zimmer A."/>
            <person name="Hide W."/>
            <person name="Bult C."/>
            <person name="Grimmond S.M."/>
            <person name="Teasdale R.D."/>
            <person name="Liu E.T."/>
            <person name="Brusic V."/>
            <person name="Quackenbush J."/>
            <person name="Wahlestedt C."/>
            <person name="Mattick J.S."/>
            <person name="Hume D.A."/>
            <person name="Kai C."/>
            <person name="Sasaki D."/>
            <person name="Tomaru Y."/>
            <person name="Fukuda S."/>
            <person name="Kanamori-Katayama M."/>
            <person name="Suzuki M."/>
            <person name="Aoki J."/>
            <person name="Arakawa T."/>
            <person name="Iida J."/>
            <person name="Imamura K."/>
            <person name="Itoh M."/>
            <person name="Kato T."/>
            <person name="Kawaji H."/>
            <person name="Kawagashira N."/>
            <person name="Kawashima T."/>
            <person name="Kojima M."/>
            <person name="Kondo S."/>
            <person name="Konno H."/>
            <person name="Nakano K."/>
            <person name="Ninomiya N."/>
            <person name="Nishio T."/>
            <person name="Okada M."/>
            <person name="Plessy C."/>
            <person name="Shibata K."/>
            <person name="Shiraki T."/>
            <person name="Suzuki S."/>
            <person name="Tagami M."/>
            <person name="Waki K."/>
            <person name="Watahiki A."/>
            <person name="Okamura-Oho Y."/>
            <person name="Suzuki H."/>
            <person name="Kawai J."/>
            <person name="Hayashizaki Y."/>
        </authorList>
    </citation>
    <scope>NUCLEOTIDE SEQUENCE [LARGE SCALE MRNA]</scope>
    <source>
        <strain>C57BL/6J</strain>
        <tissue>Embryo</tissue>
        <tissue>Embryonic head</tissue>
        <tissue>Tongue</tissue>
    </source>
</reference>
<reference key="3">
    <citation type="journal article" date="2004" name="Genome Res.">
        <title>The status, quality, and expansion of the NIH full-length cDNA project: the Mammalian Gene Collection (MGC).</title>
        <authorList>
            <consortium name="The MGC Project Team"/>
        </authorList>
    </citation>
    <scope>NUCLEOTIDE SEQUENCE [LARGE SCALE MRNA]</scope>
    <source>
        <strain>Czech II</strain>
        <tissue>Mammary tumor</tissue>
    </source>
</reference>
<reference key="4">
    <citation type="journal article" date="1996" name="Dev. Biol.">
        <title>Transient expression of translation initiation factor eIF-4C during the 2-cell stage of the preimplantation mouse embryo: identification by mRNA differential display and the role of DNA replication in zygotic gene activation.</title>
        <authorList>
            <person name="Davis W. Jr."/>
            <person name="de Sousa P.A."/>
            <person name="Schultz R.M."/>
        </authorList>
    </citation>
    <scope>NUCLEOTIDE SEQUENCE [MRNA] OF 78-144</scope>
    <source>
        <strain>CF-1 X B6D2F1/J</strain>
    </source>
</reference>
<keyword id="KW-0963">Cytoplasm</keyword>
<keyword id="KW-0396">Initiation factor</keyword>
<keyword id="KW-0648">Protein biosynthesis</keyword>
<keyword id="KW-1185">Reference proteome</keyword>
<keyword id="KW-0694">RNA-binding</keyword>
<keyword id="KW-0820">tRNA-binding</keyword>
<gene>
    <name type="primary">Eif1a</name>
</gene>
<name>IF1A_MOUSE</name>
<proteinExistence type="evidence at transcript level"/>
<accession>Q60872</accession>
<accession>O88847</accession>
<accession>Q8R2M4</accession>
<accession>Q9CX76</accession>
<accession>Q9DB61</accession>
<organism>
    <name type="scientific">Mus musculus</name>
    <name type="common">Mouse</name>
    <dbReference type="NCBI Taxonomy" id="10090"/>
    <lineage>
        <taxon>Eukaryota</taxon>
        <taxon>Metazoa</taxon>
        <taxon>Chordata</taxon>
        <taxon>Craniata</taxon>
        <taxon>Vertebrata</taxon>
        <taxon>Euteleostomi</taxon>
        <taxon>Mammalia</taxon>
        <taxon>Eutheria</taxon>
        <taxon>Euarchontoglires</taxon>
        <taxon>Glires</taxon>
        <taxon>Rodentia</taxon>
        <taxon>Myomorpha</taxon>
        <taxon>Muroidea</taxon>
        <taxon>Muridae</taxon>
        <taxon>Murinae</taxon>
        <taxon>Mus</taxon>
        <taxon>Mus</taxon>
    </lineage>
</organism>
<evidence type="ECO:0000250" key="1">
    <source>
        <dbReference type="UniProtKB" id="P47813"/>
    </source>
</evidence>
<evidence type="ECO:0000256" key="2">
    <source>
        <dbReference type="SAM" id="MobiDB-lite"/>
    </source>
</evidence>
<evidence type="ECO:0000305" key="3"/>
<sequence>MPKNKGKGGKNRRRGKNENESEKRELVFKEDGQEYAQVIKMLGNGRLEAMCFDGVRRLCHIRGKLRKKVWINTSDIILIGLRDYQDNKADVILKYNADEARSLKAYGELPEHAKINETDTFGPGDDDEIQFDDIGDDDEDIDDI</sequence>
<dbReference type="EMBL" id="AF026481">
    <property type="protein sequence ID" value="AAC63934.1"/>
    <property type="molecule type" value="mRNA"/>
</dbReference>
<dbReference type="EMBL" id="AK009026">
    <property type="protein sequence ID" value="BAB26034.1"/>
    <property type="molecule type" value="mRNA"/>
</dbReference>
<dbReference type="EMBL" id="AK013268">
    <property type="protein sequence ID" value="BAB28759.1"/>
    <property type="molecule type" value="mRNA"/>
</dbReference>
<dbReference type="EMBL" id="AK019451">
    <property type="protein sequence ID" value="BAB31727.1"/>
    <property type="molecule type" value="mRNA"/>
</dbReference>
<dbReference type="EMBL" id="BC027437">
    <property type="protein sequence ID" value="AAH27437.1"/>
    <property type="molecule type" value="mRNA"/>
</dbReference>
<dbReference type="EMBL" id="U28419">
    <property type="protein sequence ID" value="AAB05664.1"/>
    <property type="molecule type" value="mRNA"/>
</dbReference>
<dbReference type="CCDS" id="CCDS29233.1"/>
<dbReference type="RefSeq" id="NP_034250.3">
    <property type="nucleotide sequence ID" value="NM_010120.5"/>
</dbReference>
<dbReference type="BMRB" id="Q60872"/>
<dbReference type="SMR" id="Q60872"/>
<dbReference type="BioGRID" id="199411">
    <property type="interactions" value="3"/>
</dbReference>
<dbReference type="FunCoup" id="Q60872">
    <property type="interactions" value="888"/>
</dbReference>
<dbReference type="IntAct" id="Q60872">
    <property type="interactions" value="1"/>
</dbReference>
<dbReference type="MINT" id="Q60872"/>
<dbReference type="STRING" id="10090.ENSMUSP00000077223"/>
<dbReference type="iPTMnet" id="Q60872"/>
<dbReference type="PhosphoSitePlus" id="Q60872"/>
<dbReference type="SwissPalm" id="Q60872"/>
<dbReference type="jPOST" id="Q60872"/>
<dbReference type="PaxDb" id="10090-ENSMUSP00000077223"/>
<dbReference type="ProteomicsDB" id="273093"/>
<dbReference type="Pumba" id="Q60872"/>
<dbReference type="DNASU" id="13664"/>
<dbReference type="Ensembl" id="ENSMUST00000078079.11">
    <property type="protein sequence ID" value="ENSMUSP00000077223.4"/>
    <property type="gene ID" value="ENSMUSG00000057561.12"/>
</dbReference>
<dbReference type="Ensembl" id="ENSMUST00000235455.2">
    <property type="protein sequence ID" value="ENSMUSP00000157583.2"/>
    <property type="gene ID" value="ENSMUSG00000057561.12"/>
</dbReference>
<dbReference type="Ensembl" id="ENSMUST00000235973.2">
    <property type="protein sequence ID" value="ENSMUSP00000158565.2"/>
    <property type="gene ID" value="ENSMUSG00000057561.12"/>
</dbReference>
<dbReference type="Ensembl" id="ENSMUST00000238168.2">
    <property type="protein sequence ID" value="ENSMUSP00000157513.2"/>
    <property type="gene ID" value="ENSMUSG00000057561.12"/>
</dbReference>
<dbReference type="GeneID" id="13664"/>
<dbReference type="KEGG" id="mmu:13664"/>
<dbReference type="UCSC" id="uc008evs.2">
    <property type="organism name" value="mouse"/>
</dbReference>
<dbReference type="AGR" id="MGI:95298"/>
<dbReference type="CTD" id="13664"/>
<dbReference type="MGI" id="MGI:95298">
    <property type="gene designation" value="Eif1a"/>
</dbReference>
<dbReference type="VEuPathDB" id="HostDB:ENSMUSG00000057561"/>
<dbReference type="eggNOG" id="KOG3403">
    <property type="taxonomic scope" value="Eukaryota"/>
</dbReference>
<dbReference type="GeneTree" id="ENSGT00390000008256"/>
<dbReference type="HOGENOM" id="CLU_109098_0_1_1"/>
<dbReference type="InParanoid" id="Q60872"/>
<dbReference type="OMA" id="KMEDQEY"/>
<dbReference type="OrthoDB" id="274995at2759"/>
<dbReference type="PhylomeDB" id="Q60872"/>
<dbReference type="TreeFam" id="TF350394"/>
<dbReference type="BioGRID-ORCS" id="13664">
    <property type="hits" value="9 hits in 77 CRISPR screens"/>
</dbReference>
<dbReference type="ChiTaRS" id="Eif1a">
    <property type="organism name" value="mouse"/>
</dbReference>
<dbReference type="PRO" id="PR:Q60872"/>
<dbReference type="Proteomes" id="UP000000589">
    <property type="component" value="Chromosome 18"/>
</dbReference>
<dbReference type="RNAct" id="Q60872">
    <property type="molecule type" value="protein"/>
</dbReference>
<dbReference type="Bgee" id="ENSMUSG00000057561">
    <property type="expression patterns" value="Expressed in seminal vesicle and 260 other cell types or tissues"/>
</dbReference>
<dbReference type="ExpressionAtlas" id="Q60872">
    <property type="expression patterns" value="baseline and differential"/>
</dbReference>
<dbReference type="GO" id="GO:0005737">
    <property type="term" value="C:cytoplasm"/>
    <property type="evidence" value="ECO:0007669"/>
    <property type="project" value="UniProtKB-SubCell"/>
</dbReference>
<dbReference type="GO" id="GO:0003743">
    <property type="term" value="F:translation initiation factor activity"/>
    <property type="evidence" value="ECO:0007669"/>
    <property type="project" value="UniProtKB-KW"/>
</dbReference>
<dbReference type="GO" id="GO:0000049">
    <property type="term" value="F:tRNA binding"/>
    <property type="evidence" value="ECO:0007669"/>
    <property type="project" value="UniProtKB-KW"/>
</dbReference>
<dbReference type="CDD" id="cd05793">
    <property type="entry name" value="S1_IF1A"/>
    <property type="match status" value="1"/>
</dbReference>
<dbReference type="FunFam" id="2.40.50.140:FF:000071">
    <property type="entry name" value="Eukaryotic translation initiation factor 1A"/>
    <property type="match status" value="1"/>
</dbReference>
<dbReference type="Gene3D" id="2.40.50.140">
    <property type="entry name" value="Nucleic acid-binding proteins"/>
    <property type="match status" value="1"/>
</dbReference>
<dbReference type="HAMAP" id="MF_00216">
    <property type="entry name" value="aIF_1A"/>
    <property type="match status" value="1"/>
</dbReference>
<dbReference type="InterPro" id="IPR012340">
    <property type="entry name" value="NA-bd_OB-fold"/>
</dbReference>
<dbReference type="InterPro" id="IPR006196">
    <property type="entry name" value="RNA-binding_domain_S1_IF1"/>
</dbReference>
<dbReference type="InterPro" id="IPR001253">
    <property type="entry name" value="TIF_eIF-1A"/>
</dbReference>
<dbReference type="InterPro" id="IPR018104">
    <property type="entry name" value="TIF_eIF-1A_CS"/>
</dbReference>
<dbReference type="NCBIfam" id="TIGR00523">
    <property type="entry name" value="eIF-1A"/>
    <property type="match status" value="1"/>
</dbReference>
<dbReference type="PANTHER" id="PTHR21668">
    <property type="entry name" value="EIF-1A"/>
    <property type="match status" value="1"/>
</dbReference>
<dbReference type="Pfam" id="PF01176">
    <property type="entry name" value="eIF-1a"/>
    <property type="match status" value="1"/>
</dbReference>
<dbReference type="SMART" id="SM00652">
    <property type="entry name" value="eIF1a"/>
    <property type="match status" value="1"/>
</dbReference>
<dbReference type="SUPFAM" id="SSF50249">
    <property type="entry name" value="Nucleic acid-binding proteins"/>
    <property type="match status" value="1"/>
</dbReference>
<dbReference type="PROSITE" id="PS01262">
    <property type="entry name" value="IF1A"/>
    <property type="match status" value="1"/>
</dbReference>
<dbReference type="PROSITE" id="PS50832">
    <property type="entry name" value="S1_IF1_TYPE"/>
    <property type="match status" value="1"/>
</dbReference>
<comment type="function">
    <text evidence="1">Component of the 43S pre-initiation complex (43S PIC), which binds to the mRNA cap-proximal region, scans mRNA 5'-untranslated region, and locates the initiation codon. This protein enhances formation of the cap-proximal complex. Together with EIF1, facilitates scanning, start codon recognition, promotion of the assembly of 48S complex at the initiation codon (43S PIC becomes 48S PIC after the start codon is reached), and dissociation of aberrant complexes. After start codon location, together with EIF5B orients the initiator methionine-tRNA in a conformation that allows 60S ribosomal subunit joining to form the 80S initiation complex. Is released after 80S initiation complex formation, just after GTP hydrolysis by EIF5B, and before release of EIF5B. Its globular part is located in the A site of the 40S ribosomal subunit. Its interaction with EIF5 during scanning contribute to the maintenance of EIF1 within the open 43S PIC. In contrast to yeast orthologs, does not bind EIF1.</text>
</comment>
<comment type="subunit">
    <text evidence="1">Component of the 43S pre-initiation complex (43S PIC), which is composed of the 40S ribosomal subunit, EIF1, eIF1A (EIF1AX), eIF3 complex, EIF5 and eIF2-GTP-initiator tRNA complex (eIF2 ternary complex). Interacts with EIF5; this interaction contributes to the maintenance of EIF1 within the open 43S PIC. Interacts through its C-terminal domain (CTD) with the CTD of EIF5B; from the location of the start codon by the 43S complex until the formation of the 80S complex.</text>
</comment>
<comment type="subcellular location">
    <subcellularLocation>
        <location evidence="3">Cytoplasm</location>
    </subcellularLocation>
</comment>
<comment type="similarity">
    <text evidence="3">Belongs to the eIF-1A family.</text>
</comment>
<feature type="chain" id="PRO_0000145106" description="Eukaryotic translation initiation factor 1A">
    <location>
        <begin position="1"/>
        <end position="144"/>
    </location>
</feature>
<feature type="domain" description="S1-like">
    <location>
        <begin position="22"/>
        <end position="96"/>
    </location>
</feature>
<feature type="region of interest" description="Disordered" evidence="2">
    <location>
        <begin position="1"/>
        <end position="26"/>
    </location>
</feature>
<feature type="region of interest" description="Disordered" evidence="2">
    <location>
        <begin position="114"/>
        <end position="144"/>
    </location>
</feature>
<feature type="compositionally biased region" description="Basic residues" evidence="2">
    <location>
        <begin position="1"/>
        <end position="15"/>
    </location>
</feature>
<feature type="compositionally biased region" description="Basic and acidic residues" evidence="2">
    <location>
        <begin position="16"/>
        <end position="26"/>
    </location>
</feature>
<feature type="compositionally biased region" description="Acidic residues" evidence="2">
    <location>
        <begin position="124"/>
        <end position="144"/>
    </location>
</feature>
<feature type="sequence conflict" description="In Ref. 4; AAB05664." evidence="3" ref="4">
    <original>L</original>
    <variation>W</variation>
    <location>
        <position position="78"/>
    </location>
</feature>
<feature type="sequence conflict" description="In Ref. 4; AAB05664." evidence="3" ref="4">
    <original>A</original>
    <variation>P</variation>
    <location>
        <position position="97"/>
    </location>
</feature>
<feature type="sequence conflict" description="In Ref. 2; BAB31727." evidence="3" ref="2">
    <original>Y</original>
    <variation>C</variation>
    <location>
        <position position="106"/>
    </location>
</feature>
<feature type="sequence conflict" description="In Ref. 4; AAB05664." evidence="3" ref="4">
    <original>T</original>
    <variation>M</variation>
    <location>
        <position position="118"/>
    </location>
</feature>
<feature type="sequence conflict" description="In Ref. 4; AAB05664." evidence="3" ref="4">
    <original>Q</original>
    <variation>V</variation>
    <location>
        <position position="130"/>
    </location>
</feature>
<feature type="sequence conflict" description="In Ref. 4; AAB05664." evidence="3" ref="4">
    <original>D</original>
    <variation>E</variation>
    <location>
        <position position="136"/>
    </location>
</feature>